<feature type="chain" id="PRO_1000017871" description="Uridine kinase">
    <location>
        <begin position="1"/>
        <end position="208"/>
    </location>
</feature>
<feature type="binding site" evidence="1">
    <location>
        <begin position="11"/>
        <end position="18"/>
    </location>
    <ligand>
        <name>ATP</name>
        <dbReference type="ChEBI" id="CHEBI:30616"/>
    </ligand>
</feature>
<keyword id="KW-0067">ATP-binding</keyword>
<keyword id="KW-0963">Cytoplasm</keyword>
<keyword id="KW-0418">Kinase</keyword>
<keyword id="KW-0547">Nucleotide-binding</keyword>
<keyword id="KW-0808">Transferase</keyword>
<comment type="catalytic activity">
    <reaction evidence="1">
        <text>uridine + ATP = UMP + ADP + H(+)</text>
        <dbReference type="Rhea" id="RHEA:16825"/>
        <dbReference type="ChEBI" id="CHEBI:15378"/>
        <dbReference type="ChEBI" id="CHEBI:16704"/>
        <dbReference type="ChEBI" id="CHEBI:30616"/>
        <dbReference type="ChEBI" id="CHEBI:57865"/>
        <dbReference type="ChEBI" id="CHEBI:456216"/>
        <dbReference type="EC" id="2.7.1.48"/>
    </reaction>
</comment>
<comment type="catalytic activity">
    <reaction evidence="1">
        <text>cytidine + ATP = CMP + ADP + H(+)</text>
        <dbReference type="Rhea" id="RHEA:24674"/>
        <dbReference type="ChEBI" id="CHEBI:15378"/>
        <dbReference type="ChEBI" id="CHEBI:17562"/>
        <dbReference type="ChEBI" id="CHEBI:30616"/>
        <dbReference type="ChEBI" id="CHEBI:60377"/>
        <dbReference type="ChEBI" id="CHEBI:456216"/>
        <dbReference type="EC" id="2.7.1.48"/>
    </reaction>
</comment>
<comment type="pathway">
    <text evidence="1">Pyrimidine metabolism; CTP biosynthesis via salvage pathway; CTP from cytidine: step 1/3.</text>
</comment>
<comment type="pathway">
    <text evidence="1">Pyrimidine metabolism; UMP biosynthesis via salvage pathway; UMP from uridine: step 1/1.</text>
</comment>
<comment type="subcellular location">
    <subcellularLocation>
        <location evidence="1">Cytoplasm</location>
    </subcellularLocation>
</comment>
<comment type="similarity">
    <text evidence="1">Belongs to the uridine kinase family.</text>
</comment>
<proteinExistence type="inferred from homology"/>
<dbReference type="EC" id="2.7.1.48" evidence="1"/>
<dbReference type="EMBL" id="CP000246">
    <property type="protein sequence ID" value="ABG84987.1"/>
    <property type="molecule type" value="Genomic_DNA"/>
</dbReference>
<dbReference type="RefSeq" id="WP_003459577.1">
    <property type="nucleotide sequence ID" value="NC_008261.1"/>
</dbReference>
<dbReference type="SMR" id="Q0TPI4"/>
<dbReference type="STRING" id="195103.CPF_2023"/>
<dbReference type="PaxDb" id="195103-CPF_2023"/>
<dbReference type="GeneID" id="93001694"/>
<dbReference type="KEGG" id="cpf:CPF_2023"/>
<dbReference type="eggNOG" id="COG0572">
    <property type="taxonomic scope" value="Bacteria"/>
</dbReference>
<dbReference type="HOGENOM" id="CLU_021278_1_2_9"/>
<dbReference type="UniPathway" id="UPA00574">
    <property type="reaction ID" value="UER00637"/>
</dbReference>
<dbReference type="UniPathway" id="UPA00579">
    <property type="reaction ID" value="UER00640"/>
</dbReference>
<dbReference type="Proteomes" id="UP000001823">
    <property type="component" value="Chromosome"/>
</dbReference>
<dbReference type="GO" id="GO:0005737">
    <property type="term" value="C:cytoplasm"/>
    <property type="evidence" value="ECO:0007669"/>
    <property type="project" value="UniProtKB-SubCell"/>
</dbReference>
<dbReference type="GO" id="GO:0005524">
    <property type="term" value="F:ATP binding"/>
    <property type="evidence" value="ECO:0007669"/>
    <property type="project" value="UniProtKB-UniRule"/>
</dbReference>
<dbReference type="GO" id="GO:0043771">
    <property type="term" value="F:cytidine kinase activity"/>
    <property type="evidence" value="ECO:0007669"/>
    <property type="project" value="RHEA"/>
</dbReference>
<dbReference type="GO" id="GO:0004849">
    <property type="term" value="F:uridine kinase activity"/>
    <property type="evidence" value="ECO:0007669"/>
    <property type="project" value="UniProtKB-UniRule"/>
</dbReference>
<dbReference type="GO" id="GO:0044211">
    <property type="term" value="P:CTP salvage"/>
    <property type="evidence" value="ECO:0007669"/>
    <property type="project" value="UniProtKB-UniRule"/>
</dbReference>
<dbReference type="GO" id="GO:0044206">
    <property type="term" value="P:UMP salvage"/>
    <property type="evidence" value="ECO:0007669"/>
    <property type="project" value="UniProtKB-UniRule"/>
</dbReference>
<dbReference type="CDD" id="cd02023">
    <property type="entry name" value="UMPK"/>
    <property type="match status" value="1"/>
</dbReference>
<dbReference type="Gene3D" id="3.40.50.300">
    <property type="entry name" value="P-loop containing nucleotide triphosphate hydrolases"/>
    <property type="match status" value="1"/>
</dbReference>
<dbReference type="HAMAP" id="MF_00551">
    <property type="entry name" value="Uridine_kinase"/>
    <property type="match status" value="1"/>
</dbReference>
<dbReference type="InterPro" id="IPR027417">
    <property type="entry name" value="P-loop_NTPase"/>
</dbReference>
<dbReference type="InterPro" id="IPR006083">
    <property type="entry name" value="PRK/URK"/>
</dbReference>
<dbReference type="InterPro" id="IPR026008">
    <property type="entry name" value="Uridine_kinase"/>
</dbReference>
<dbReference type="InterPro" id="IPR000764">
    <property type="entry name" value="Uridine_kinase-like"/>
</dbReference>
<dbReference type="NCBIfam" id="NF004018">
    <property type="entry name" value="PRK05480.1"/>
    <property type="match status" value="1"/>
</dbReference>
<dbReference type="NCBIfam" id="TIGR00235">
    <property type="entry name" value="udk"/>
    <property type="match status" value="1"/>
</dbReference>
<dbReference type="PANTHER" id="PTHR10285">
    <property type="entry name" value="URIDINE KINASE"/>
    <property type="match status" value="1"/>
</dbReference>
<dbReference type="Pfam" id="PF00485">
    <property type="entry name" value="PRK"/>
    <property type="match status" value="1"/>
</dbReference>
<dbReference type="PRINTS" id="PR00988">
    <property type="entry name" value="URIDINKINASE"/>
</dbReference>
<dbReference type="SUPFAM" id="SSF52540">
    <property type="entry name" value="P-loop containing nucleoside triphosphate hydrolases"/>
    <property type="match status" value="1"/>
</dbReference>
<reference key="1">
    <citation type="journal article" date="2006" name="Genome Res.">
        <title>Skewed genomic variability in strains of the toxigenic bacterial pathogen, Clostridium perfringens.</title>
        <authorList>
            <person name="Myers G.S.A."/>
            <person name="Rasko D.A."/>
            <person name="Cheung J.K."/>
            <person name="Ravel J."/>
            <person name="Seshadri R."/>
            <person name="DeBoy R.T."/>
            <person name="Ren Q."/>
            <person name="Varga J."/>
            <person name="Awad M.M."/>
            <person name="Brinkac L.M."/>
            <person name="Daugherty S.C."/>
            <person name="Haft D.H."/>
            <person name="Dodson R.J."/>
            <person name="Madupu R."/>
            <person name="Nelson W.C."/>
            <person name="Rosovitz M.J."/>
            <person name="Sullivan S.A."/>
            <person name="Khouri H."/>
            <person name="Dimitrov G.I."/>
            <person name="Watkins K.L."/>
            <person name="Mulligan S."/>
            <person name="Benton J."/>
            <person name="Radune D."/>
            <person name="Fisher D.J."/>
            <person name="Atkins H.S."/>
            <person name="Hiscox T."/>
            <person name="Jost B.H."/>
            <person name="Billington S.J."/>
            <person name="Songer J.G."/>
            <person name="McClane B.A."/>
            <person name="Titball R.W."/>
            <person name="Rood J.I."/>
            <person name="Melville S.B."/>
            <person name="Paulsen I.T."/>
        </authorList>
    </citation>
    <scope>NUCLEOTIDE SEQUENCE [LARGE SCALE GENOMIC DNA]</scope>
    <source>
        <strain>ATCC 13124 / DSM 756 / JCM 1290 / NCIMB 6125 / NCTC 8237 / S 107 / Type A</strain>
    </source>
</reference>
<accession>Q0TPI4</accession>
<protein>
    <recommendedName>
        <fullName evidence="1">Uridine kinase</fullName>
        <ecNumber evidence="1">2.7.1.48</ecNumber>
    </recommendedName>
    <alternativeName>
        <fullName evidence="1">Cytidine monophosphokinase</fullName>
    </alternativeName>
    <alternativeName>
        <fullName evidence="1">Uridine monophosphokinase</fullName>
    </alternativeName>
</protein>
<evidence type="ECO:0000255" key="1">
    <source>
        <dbReference type="HAMAP-Rule" id="MF_00551"/>
    </source>
</evidence>
<gene>
    <name evidence="1" type="primary">udk</name>
    <name type="ordered locus">CPF_2023</name>
</gene>
<sequence>MKRPIFIGITGGTGSGKSTIAKEIYRQFGEDCIAMIEQDSYYKDQSHLSMEDRVKTNYDHPNAFDNNLLVSHLESLLNGHSIQKPSYDFSIHNRIEDTTKVEPKEIVIVEGILILEDPRIRELLDIKIYVDTDADVRIIRRMVRDINERGRTMESVINQYLNVVKPMHNQFTEPTKKFADIIIPEGGHNKVAIDIIVAKIKEVLGKYE</sequence>
<name>URK_CLOP1</name>
<organism>
    <name type="scientific">Clostridium perfringens (strain ATCC 13124 / DSM 756 / JCM 1290 / NCIMB 6125 / NCTC 8237 / Type A)</name>
    <dbReference type="NCBI Taxonomy" id="195103"/>
    <lineage>
        <taxon>Bacteria</taxon>
        <taxon>Bacillati</taxon>
        <taxon>Bacillota</taxon>
        <taxon>Clostridia</taxon>
        <taxon>Eubacteriales</taxon>
        <taxon>Clostridiaceae</taxon>
        <taxon>Clostridium</taxon>
    </lineage>
</organism>